<reference key="1">
    <citation type="journal article" date="1996" name="J. Biotechnol.">
        <title>Cloning and characterization of the gene for the thermostable xylanase XynA from Thermomyces lanuginosus.</title>
        <authorList>
            <person name="Schlacher A."/>
            <person name="Holzmann K."/>
            <person name="Hayn M."/>
            <person name="Steiner W."/>
            <person name="Schwab H."/>
        </authorList>
    </citation>
    <scope>NUCLEOTIDE SEQUENCE [GENOMIC DNA]</scope>
    <source>
        <strain>DSM 5826 / Tsiklinsky</strain>
    </source>
</reference>
<reference key="2">
    <citation type="submission" date="2009-10" db="EMBL/GenBank/DDBJ databases">
        <title>Expression and characterization of the xylanase gene xynA from Thermomyces lanuginosus in Pichia pastoris.</title>
        <authorList>
            <person name="Guo R."/>
            <person name="Zhao N."/>
        </authorList>
    </citation>
    <scope>NUCLEOTIDE SEQUENCE [GENOMIC DNA] OF 32-225</scope>
</reference>
<reference key="3">
    <citation type="submission" date="2010-07" db="UniProtKB">
        <title>Thermomyces lanuginosus SS-8 endo-beta-1,4-D-xylanase precursor.</title>
        <authorList>
            <person name="Shrivastava S."/>
            <person name="Deepalakshmi P.D."/>
            <person name="Shukla P."/>
            <person name="Mukhopadhyay K."/>
        </authorList>
    </citation>
    <scope>PROTEIN SEQUENCE OF 81-89; 154-172 AND 193-225</scope>
    <scope>CATALYTIC ACTIVITY</scope>
    <scope>BIOPHYSICOCHEMICAL PROPERTIES</scope>
    <scope>INDUCTION</scope>
    <scope>MASS SPECTROMETRY</scope>
    <source>
        <strain>SS-8</strain>
    </source>
</reference>
<reference key="4">
    <citation type="journal article" date="1998" name="Biochemistry">
        <title>Thermophilic xylanase from Thermomyces lanuginosus: high-resolution X-ray structure and modeling studies.</title>
        <authorList>
            <person name="Gruber K."/>
            <person name="Klintschar G."/>
            <person name="Hayn M."/>
            <person name="Schlacher A."/>
            <person name="Steiner W."/>
            <person name="Kratky C."/>
        </authorList>
    </citation>
    <scope>X-RAY CRYSTALLOGRAPHY (1.55 ANGSTROMS)</scope>
    <source>
        <strain>DSM 5826 / Tsiklinsky</strain>
    </source>
</reference>
<proteinExistence type="evidence at protein level"/>
<evidence type="ECO:0000250" key="1">
    <source>
        <dbReference type="UniProtKB" id="P36217"/>
    </source>
</evidence>
<evidence type="ECO:0000255" key="2">
    <source>
        <dbReference type="PROSITE-ProRule" id="PRU01097"/>
    </source>
</evidence>
<evidence type="ECO:0000269" key="3">
    <source ref="3"/>
</evidence>
<evidence type="ECO:0000305" key="4"/>
<evidence type="ECO:0007829" key="5">
    <source>
        <dbReference type="PDB" id="1YNA"/>
    </source>
</evidence>
<comment type="catalytic activity">
    <reaction evidence="3">
        <text>Endohydrolysis of (1-&gt;4)-beta-D-xylosidic linkages in xylans.</text>
        <dbReference type="EC" id="3.2.1.8"/>
    </reaction>
</comment>
<comment type="biophysicochemical properties">
    <kinetics>
        <Vmax evidence="3">2223.3 umol/min/mg enzyme</Vmax>
    </kinetics>
    <phDependence>
        <text evidence="3">Optimum pH is 6.0.</text>
    </phDependence>
    <temperatureDependence>
        <text evidence="3">Optimum temperature is 60 degrees Celsius. Thermostable.</text>
    </temperatureDependence>
</comment>
<comment type="pathway">
    <text>Glycan degradation; xylan degradation.</text>
</comment>
<comment type="induction">
    <text evidence="3">By xylan.</text>
</comment>
<comment type="mass spectrometry" mass="21300.0" method="MALDI" evidence="3"/>
<comment type="similarity">
    <text evidence="4">Belongs to the glycosyl hydrolase 11 (cellulase G) family.</text>
</comment>
<feature type="signal peptide">
    <location>
        <begin position="1"/>
        <end position="31"/>
    </location>
</feature>
<feature type="chain" id="PRO_0000008012" description="Endo-1,4-beta-xylanase">
    <location>
        <begin position="32"/>
        <end position="225"/>
    </location>
</feature>
<feature type="domain" description="GH11" evidence="2">
    <location>
        <begin position="32"/>
        <end position="222"/>
    </location>
</feature>
<feature type="active site" description="Nucleophile">
    <location>
        <position position="117"/>
    </location>
</feature>
<feature type="active site" description="Proton donor">
    <location>
        <position position="209"/>
    </location>
</feature>
<feature type="modified residue" description="Pyrrolidone carboxylic acid" evidence="1">
    <location>
        <position position="32"/>
    </location>
</feature>
<feature type="disulfide bond">
    <location>
        <begin position="141"/>
        <end position="185"/>
    </location>
</feature>
<feature type="sequence conflict" description="In Ref. 2; ACY69861." evidence="4" ref="2">
    <original>S</original>
    <variation>P</variation>
    <location>
        <position position="130"/>
    </location>
</feature>
<feature type="sequence conflict" description="In Ref. 2; ACY69861." evidence="4" ref="2">
    <original>T</original>
    <variation>A</variation>
    <location>
        <position position="177"/>
    </location>
</feature>
<feature type="strand" evidence="5">
    <location>
        <begin position="37"/>
        <end position="41"/>
    </location>
</feature>
<feature type="strand" evidence="5">
    <location>
        <begin position="44"/>
        <end position="50"/>
    </location>
</feature>
<feature type="strand" evidence="5">
    <location>
        <begin position="52"/>
        <end position="54"/>
    </location>
</feature>
<feature type="strand" evidence="5">
    <location>
        <begin position="56"/>
        <end position="60"/>
    </location>
</feature>
<feature type="strand" evidence="5">
    <location>
        <begin position="65"/>
        <end position="70"/>
    </location>
</feature>
<feature type="strand" evidence="5">
    <location>
        <begin position="72"/>
        <end position="84"/>
    </location>
</feature>
<feature type="strand" evidence="5">
    <location>
        <begin position="90"/>
        <end position="112"/>
    </location>
</feature>
<feature type="turn" evidence="5">
    <location>
        <begin position="113"/>
        <end position="115"/>
    </location>
</feature>
<feature type="strand" evidence="5">
    <location>
        <begin position="116"/>
        <end position="127"/>
    </location>
</feature>
<feature type="turn" evidence="5">
    <location>
        <begin position="129"/>
        <end position="132"/>
    </location>
</feature>
<feature type="strand" evidence="5">
    <location>
        <begin position="134"/>
        <end position="141"/>
    </location>
</feature>
<feature type="strand" evidence="5">
    <location>
        <begin position="144"/>
        <end position="158"/>
    </location>
</feature>
<feature type="strand" evidence="5">
    <location>
        <begin position="161"/>
        <end position="174"/>
    </location>
</feature>
<feature type="strand" evidence="5">
    <location>
        <begin position="177"/>
        <end position="182"/>
    </location>
</feature>
<feature type="helix" evidence="5">
    <location>
        <begin position="183"/>
        <end position="192"/>
    </location>
</feature>
<feature type="strand" evidence="5">
    <location>
        <begin position="199"/>
        <end position="212"/>
    </location>
</feature>
<feature type="strand" evidence="5">
    <location>
        <begin position="214"/>
        <end position="223"/>
    </location>
</feature>
<dbReference type="EC" id="3.2.1.8"/>
<dbReference type="EMBL" id="U35436">
    <property type="protein sequence ID" value="AAB94633.1"/>
    <property type="molecule type" value="Genomic_DNA"/>
</dbReference>
<dbReference type="EMBL" id="GU166389">
    <property type="protein sequence ID" value="ACY69861.1"/>
    <property type="molecule type" value="Genomic_DNA"/>
</dbReference>
<dbReference type="PDB" id="1YNA">
    <property type="method" value="X-ray"/>
    <property type="resolution" value="1.55 A"/>
    <property type="chains" value="A=33-225"/>
</dbReference>
<dbReference type="PDBsum" id="1YNA"/>
<dbReference type="SMR" id="O43097"/>
<dbReference type="CAZy" id="GH11">
    <property type="family name" value="Glycoside Hydrolase Family 11"/>
</dbReference>
<dbReference type="BRENDA" id="3.2.1.8">
    <property type="organism ID" value="2711"/>
</dbReference>
<dbReference type="UniPathway" id="UPA00114"/>
<dbReference type="EvolutionaryTrace" id="O43097"/>
<dbReference type="GO" id="GO:0031176">
    <property type="term" value="F:endo-1,4-beta-xylanase activity"/>
    <property type="evidence" value="ECO:0007669"/>
    <property type="project" value="UniProtKB-EC"/>
</dbReference>
<dbReference type="GO" id="GO:0045493">
    <property type="term" value="P:xylan catabolic process"/>
    <property type="evidence" value="ECO:0007669"/>
    <property type="project" value="UniProtKB-UniPathway"/>
</dbReference>
<dbReference type="FunFam" id="2.60.120.180:FF:000001">
    <property type="entry name" value="Endo-1,4-beta-xylanase"/>
    <property type="match status" value="1"/>
</dbReference>
<dbReference type="Gene3D" id="2.60.120.180">
    <property type="match status" value="1"/>
</dbReference>
<dbReference type="InterPro" id="IPR013320">
    <property type="entry name" value="ConA-like_dom_sf"/>
</dbReference>
<dbReference type="InterPro" id="IPR013319">
    <property type="entry name" value="GH11/12"/>
</dbReference>
<dbReference type="InterPro" id="IPR018208">
    <property type="entry name" value="GH11_AS_1"/>
</dbReference>
<dbReference type="InterPro" id="IPR033119">
    <property type="entry name" value="GH11_AS_2"/>
</dbReference>
<dbReference type="InterPro" id="IPR033123">
    <property type="entry name" value="GH11_dom"/>
</dbReference>
<dbReference type="InterPro" id="IPR001137">
    <property type="entry name" value="Glyco_hydro_11"/>
</dbReference>
<dbReference type="PANTHER" id="PTHR46828:SF3">
    <property type="entry name" value="ENDO-1,4-BETA-XYLANASE"/>
    <property type="match status" value="1"/>
</dbReference>
<dbReference type="PANTHER" id="PTHR46828">
    <property type="entry name" value="ENDO-1,4-BETA-XYLANASE A-RELATED"/>
    <property type="match status" value="1"/>
</dbReference>
<dbReference type="Pfam" id="PF00457">
    <property type="entry name" value="Glyco_hydro_11"/>
    <property type="match status" value="1"/>
</dbReference>
<dbReference type="PRINTS" id="PR00911">
    <property type="entry name" value="GLHYDRLASE11"/>
</dbReference>
<dbReference type="SUPFAM" id="SSF49899">
    <property type="entry name" value="Concanavalin A-like lectins/glucanases"/>
    <property type="match status" value="1"/>
</dbReference>
<dbReference type="PROSITE" id="PS00776">
    <property type="entry name" value="GH11_1"/>
    <property type="match status" value="1"/>
</dbReference>
<dbReference type="PROSITE" id="PS00777">
    <property type="entry name" value="GH11_2"/>
    <property type="match status" value="1"/>
</dbReference>
<dbReference type="PROSITE" id="PS51761">
    <property type="entry name" value="GH11_3"/>
    <property type="match status" value="1"/>
</dbReference>
<accession>O43097</accession>
<accession>D1MH26</accession>
<gene>
    <name type="primary">XYNA</name>
</gene>
<sequence length="225" mass="24356">MVGFTPVALAALAATGALAFPAGNATELEKRQTTPNSEGWHDGYYYSWWSDGGAQATYTNLEGGTYEISWGDGGNLVGGKGWNPGLNARAIHFEGVYQPNGNSYLAVYGWTRNPLVEYYIVENFGTYDPSSGATDLGTVECDGSIYRLGKTTRVNAPSIDGTQTFDQYWSVRQDKRTSGTVQTGCHFDAWARAGLNVNGDHYYQIVATEGYFSSGYARITVADVG</sequence>
<organism>
    <name type="scientific">Thermomyces lanuginosus</name>
    <name type="common">Humicola lanuginosa</name>
    <dbReference type="NCBI Taxonomy" id="5541"/>
    <lineage>
        <taxon>Eukaryota</taxon>
        <taxon>Fungi</taxon>
        <taxon>Dikarya</taxon>
        <taxon>Ascomycota</taxon>
        <taxon>Pezizomycotina</taxon>
        <taxon>Eurotiomycetes</taxon>
        <taxon>Eurotiomycetidae</taxon>
        <taxon>Eurotiales</taxon>
        <taxon>Trichocomaceae</taxon>
        <taxon>Thermomyces</taxon>
    </lineage>
</organism>
<keyword id="KW-0002">3D-structure</keyword>
<keyword id="KW-0119">Carbohydrate metabolism</keyword>
<keyword id="KW-0903">Direct protein sequencing</keyword>
<keyword id="KW-1015">Disulfide bond</keyword>
<keyword id="KW-0326">Glycosidase</keyword>
<keyword id="KW-0378">Hydrolase</keyword>
<keyword id="KW-0624">Polysaccharide degradation</keyword>
<keyword id="KW-0873">Pyrrolidone carboxylic acid</keyword>
<keyword id="KW-0732">Signal</keyword>
<keyword id="KW-0858">Xylan degradation</keyword>
<protein>
    <recommendedName>
        <fullName>Endo-1,4-beta-xylanase</fullName>
        <shortName>Xylanase</shortName>
        <ecNumber>3.2.1.8</ecNumber>
    </recommendedName>
    <alternativeName>
        <fullName>1,4-beta-D-xylan xylanohydrolase</fullName>
    </alternativeName>
</protein>
<name>XYNA_THELA</name>